<reference key="1">
    <citation type="journal article" date="2005" name="PLoS Genet.">
        <title>Life in hot carbon monoxide: the complete genome sequence of Carboxydothermus hydrogenoformans Z-2901.</title>
        <authorList>
            <person name="Wu M."/>
            <person name="Ren Q."/>
            <person name="Durkin A.S."/>
            <person name="Daugherty S.C."/>
            <person name="Brinkac L.M."/>
            <person name="Dodson R.J."/>
            <person name="Madupu R."/>
            <person name="Sullivan S.A."/>
            <person name="Kolonay J.F."/>
            <person name="Nelson W.C."/>
            <person name="Tallon L.J."/>
            <person name="Jones K.M."/>
            <person name="Ulrich L.E."/>
            <person name="Gonzalez J.M."/>
            <person name="Zhulin I.B."/>
            <person name="Robb F.T."/>
            <person name="Eisen J.A."/>
        </authorList>
    </citation>
    <scope>NUCLEOTIDE SEQUENCE [LARGE SCALE GENOMIC DNA]</scope>
    <source>
        <strain>ATCC BAA-161 / DSM 6008 / Z-2901</strain>
    </source>
</reference>
<sequence>MLRQYEVMYILHPELDAEKTESIIERFKGMIEQEGGEVTKIDRWGKRRFAYEIKKLREGYYVVMNFKAKAETAQELDRLLRISDDVVRHIVIREDK</sequence>
<evidence type="ECO:0000255" key="1">
    <source>
        <dbReference type="HAMAP-Rule" id="MF_00360"/>
    </source>
</evidence>
<evidence type="ECO:0000305" key="2"/>
<feature type="chain" id="PRO_0000229530" description="Small ribosomal subunit protein bS6">
    <location>
        <begin position="1"/>
        <end position="96"/>
    </location>
</feature>
<keyword id="KW-1185">Reference proteome</keyword>
<keyword id="KW-0687">Ribonucleoprotein</keyword>
<keyword id="KW-0689">Ribosomal protein</keyword>
<keyword id="KW-0694">RNA-binding</keyword>
<keyword id="KW-0699">rRNA-binding</keyword>
<gene>
    <name evidence="1" type="primary">rpsF</name>
    <name type="ordered locus">CHY_0035</name>
</gene>
<dbReference type="EMBL" id="CP000141">
    <property type="protein sequence ID" value="ABB13845.1"/>
    <property type="molecule type" value="Genomic_DNA"/>
</dbReference>
<dbReference type="SMR" id="Q3AG27"/>
<dbReference type="FunCoup" id="Q3AG27">
    <property type="interactions" value="388"/>
</dbReference>
<dbReference type="STRING" id="246194.CHY_0035"/>
<dbReference type="KEGG" id="chy:CHY_0035"/>
<dbReference type="eggNOG" id="COG0360">
    <property type="taxonomic scope" value="Bacteria"/>
</dbReference>
<dbReference type="HOGENOM" id="CLU_113441_5_1_9"/>
<dbReference type="InParanoid" id="Q3AG27"/>
<dbReference type="Proteomes" id="UP000002706">
    <property type="component" value="Chromosome"/>
</dbReference>
<dbReference type="GO" id="GO:0005737">
    <property type="term" value="C:cytoplasm"/>
    <property type="evidence" value="ECO:0007669"/>
    <property type="project" value="UniProtKB-ARBA"/>
</dbReference>
<dbReference type="GO" id="GO:1990904">
    <property type="term" value="C:ribonucleoprotein complex"/>
    <property type="evidence" value="ECO:0007669"/>
    <property type="project" value="UniProtKB-KW"/>
</dbReference>
<dbReference type="GO" id="GO:0005840">
    <property type="term" value="C:ribosome"/>
    <property type="evidence" value="ECO:0007669"/>
    <property type="project" value="UniProtKB-KW"/>
</dbReference>
<dbReference type="GO" id="GO:0070181">
    <property type="term" value="F:small ribosomal subunit rRNA binding"/>
    <property type="evidence" value="ECO:0007669"/>
    <property type="project" value="TreeGrafter"/>
</dbReference>
<dbReference type="GO" id="GO:0003735">
    <property type="term" value="F:structural constituent of ribosome"/>
    <property type="evidence" value="ECO:0007669"/>
    <property type="project" value="InterPro"/>
</dbReference>
<dbReference type="GO" id="GO:0006412">
    <property type="term" value="P:translation"/>
    <property type="evidence" value="ECO:0007669"/>
    <property type="project" value="UniProtKB-UniRule"/>
</dbReference>
<dbReference type="CDD" id="cd00473">
    <property type="entry name" value="bS6"/>
    <property type="match status" value="1"/>
</dbReference>
<dbReference type="FunFam" id="3.30.70.60:FF:000002">
    <property type="entry name" value="30S ribosomal protein S6"/>
    <property type="match status" value="1"/>
</dbReference>
<dbReference type="Gene3D" id="3.30.70.60">
    <property type="match status" value="1"/>
</dbReference>
<dbReference type="HAMAP" id="MF_00360">
    <property type="entry name" value="Ribosomal_bS6"/>
    <property type="match status" value="1"/>
</dbReference>
<dbReference type="InterPro" id="IPR000529">
    <property type="entry name" value="Ribosomal_bS6"/>
</dbReference>
<dbReference type="InterPro" id="IPR035980">
    <property type="entry name" value="Ribosomal_bS6_sf"/>
</dbReference>
<dbReference type="InterPro" id="IPR020814">
    <property type="entry name" value="Ribosomal_S6_plastid/chlpt"/>
</dbReference>
<dbReference type="InterPro" id="IPR014717">
    <property type="entry name" value="Transl_elong_EF1B/ribsomal_bS6"/>
</dbReference>
<dbReference type="NCBIfam" id="TIGR00166">
    <property type="entry name" value="S6"/>
    <property type="match status" value="1"/>
</dbReference>
<dbReference type="PANTHER" id="PTHR21011">
    <property type="entry name" value="MITOCHONDRIAL 28S RIBOSOMAL PROTEIN S6"/>
    <property type="match status" value="1"/>
</dbReference>
<dbReference type="PANTHER" id="PTHR21011:SF1">
    <property type="entry name" value="SMALL RIBOSOMAL SUBUNIT PROTEIN BS6M"/>
    <property type="match status" value="1"/>
</dbReference>
<dbReference type="Pfam" id="PF01250">
    <property type="entry name" value="Ribosomal_S6"/>
    <property type="match status" value="1"/>
</dbReference>
<dbReference type="SUPFAM" id="SSF54995">
    <property type="entry name" value="Ribosomal protein S6"/>
    <property type="match status" value="1"/>
</dbReference>
<organism>
    <name type="scientific">Carboxydothermus hydrogenoformans (strain ATCC BAA-161 / DSM 6008 / Z-2901)</name>
    <dbReference type="NCBI Taxonomy" id="246194"/>
    <lineage>
        <taxon>Bacteria</taxon>
        <taxon>Bacillati</taxon>
        <taxon>Bacillota</taxon>
        <taxon>Clostridia</taxon>
        <taxon>Thermoanaerobacterales</taxon>
        <taxon>Thermoanaerobacteraceae</taxon>
        <taxon>Carboxydothermus</taxon>
    </lineage>
</organism>
<proteinExistence type="inferred from homology"/>
<protein>
    <recommendedName>
        <fullName evidence="1">Small ribosomal subunit protein bS6</fullName>
    </recommendedName>
    <alternativeName>
        <fullName evidence="2">30S ribosomal protein S6</fullName>
    </alternativeName>
</protein>
<name>RS6_CARHZ</name>
<comment type="function">
    <text evidence="1">Binds together with bS18 to 16S ribosomal RNA.</text>
</comment>
<comment type="similarity">
    <text evidence="1">Belongs to the bacterial ribosomal protein bS6 family.</text>
</comment>
<accession>Q3AG27</accession>